<dbReference type="EMBL" id="HF679027">
    <property type="protein sequence ID" value="CCT67994.1"/>
    <property type="molecule type" value="Genomic_DNA"/>
</dbReference>
<dbReference type="SMR" id="S0DZI6"/>
<dbReference type="STRING" id="1279085.S0DZI6"/>
<dbReference type="EnsemblFungi" id="CCT67994">
    <property type="protein sequence ID" value="CCT67994"/>
    <property type="gene ID" value="FFUJ_06745"/>
</dbReference>
<dbReference type="VEuPathDB" id="FungiDB:FFUJ_06745"/>
<dbReference type="HOGENOM" id="CLU_007383_10_0_1"/>
<dbReference type="Proteomes" id="UP000016800">
    <property type="component" value="Chromosome 5"/>
</dbReference>
<dbReference type="Gene3D" id="3.40.50.720">
    <property type="entry name" value="NAD(P)-binding Rossmann-like Domain"/>
    <property type="match status" value="1"/>
</dbReference>
<dbReference type="InterPro" id="IPR051604">
    <property type="entry name" value="Ergot_Alk_Oxidoreductase"/>
</dbReference>
<dbReference type="InterPro" id="IPR036291">
    <property type="entry name" value="NAD(P)-bd_dom_sf"/>
</dbReference>
<dbReference type="InterPro" id="IPR008030">
    <property type="entry name" value="NmrA-like"/>
</dbReference>
<dbReference type="PANTHER" id="PTHR43162">
    <property type="match status" value="1"/>
</dbReference>
<dbReference type="PANTHER" id="PTHR43162:SF1">
    <property type="entry name" value="PRESTALK A DIFFERENTIATION PROTEIN A"/>
    <property type="match status" value="1"/>
</dbReference>
<dbReference type="Pfam" id="PF05368">
    <property type="entry name" value="NmrA"/>
    <property type="match status" value="1"/>
</dbReference>
<dbReference type="SUPFAM" id="SSF51735">
    <property type="entry name" value="NAD(P)-binding Rossmann-fold domains"/>
    <property type="match status" value="1"/>
</dbReference>
<accession>S0DZI6</accession>
<name>BIK4_GIBF5</name>
<feature type="chain" id="PRO_0000436341" description="Nitrogen metabolite regulation-like protein bik4">
    <location>
        <begin position="1"/>
        <end position="326"/>
    </location>
</feature>
<feature type="binding site" evidence="1">
    <location>
        <begin position="13"/>
        <end position="18"/>
    </location>
    <ligand>
        <name>NADP(+)</name>
        <dbReference type="ChEBI" id="CHEBI:58349"/>
    </ligand>
</feature>
<feature type="binding site" evidence="1">
    <location>
        <begin position="161"/>
        <end position="164"/>
    </location>
    <ligand>
        <name>NADP(+)</name>
        <dbReference type="ChEBI" id="CHEBI:58349"/>
    </ligand>
</feature>
<reference key="1">
    <citation type="journal article" date="2013" name="PLoS Pathog.">
        <title>Deciphering the cryptic genome: genome-wide analyses of the rice pathogen Fusarium fujikuroi reveal complex regulation of secondary metabolism and novel metabolites.</title>
        <authorList>
            <person name="Wiemann P."/>
            <person name="Sieber C.M.K."/>
            <person name="von Bargen K.W."/>
            <person name="Studt L."/>
            <person name="Niehaus E.-M."/>
            <person name="Espino J.J."/>
            <person name="Huss K."/>
            <person name="Michielse C.B."/>
            <person name="Albermann S."/>
            <person name="Wagner D."/>
            <person name="Bergner S.V."/>
            <person name="Connolly L.R."/>
            <person name="Fischer A."/>
            <person name="Reuter G."/>
            <person name="Kleigrewe K."/>
            <person name="Bald T."/>
            <person name="Wingfield B.D."/>
            <person name="Ophir R."/>
            <person name="Freeman S."/>
            <person name="Hippler M."/>
            <person name="Smith K.M."/>
            <person name="Brown D.W."/>
            <person name="Proctor R.H."/>
            <person name="Muensterkoetter M."/>
            <person name="Freitag M."/>
            <person name="Humpf H.-U."/>
            <person name="Gueldener U."/>
            <person name="Tudzynski B."/>
        </authorList>
    </citation>
    <scope>NUCLEOTIDE SEQUENCE [LARGE SCALE GENOMIC DNA]</scope>
    <source>
        <strain>CBS 195.34 / IMI 58289 / NRRL A-6831</strain>
    </source>
</reference>
<reference key="2">
    <citation type="journal article" date="2009" name="Mol. Microbiol.">
        <title>Biosynthesis of the red pigment bikaverin in Fusarium fujikuroi: genes, their function and regulation.</title>
        <authorList>
            <person name="Wiemann P."/>
            <person name="Willmann A."/>
            <person name="Straeten M."/>
            <person name="Kleigrewe K."/>
            <person name="Beyer M."/>
            <person name="Humpf H.U."/>
            <person name="Tudzynski B."/>
        </authorList>
    </citation>
    <scope>FUNCTION</scope>
    <scope>INDUCTION</scope>
    <scope>DISRUPTION PHENOTYPE</scope>
</reference>
<sequence length="326" mass="35837">MPSPHFSKVLVFGATGEVGSAVALEAHALGAHVSIALRDTTKHNEWISPSQEHAADLQRISADLTDPDSLKRAVHDTGAQAAFIYAVRSKDTLRGAITALRDAGIQYLVFLSTSQVRTAGTTKGDIRSIKPDHFIPWQHAQVEIALEELEVPHAAVRAGFFASNPLRIYLDRSSEPKQVNLLAPEVPHDPIDPKDIGRAAAAVLVNPRLYASGYQGEPKKDVVYLSGPALLSQTEQWEIINRELVAAGKPEVKVNHITVEQYLENLAKLHVPDVVAKSLAKSMVETRALYAPEDYEKSRGNVELLTGRKATAFDEFVKREIPRYFD</sequence>
<gene>
    <name evidence="3" type="primary">bik4</name>
    <name type="ORF">FFUJ_06745</name>
</gene>
<organism>
    <name type="scientific">Gibberella fujikuroi (strain CBS 195.34 / IMI 58289 / NRRL A-6831)</name>
    <name type="common">Bakanae and foot rot disease fungus</name>
    <name type="synonym">Fusarium fujikuroi</name>
    <dbReference type="NCBI Taxonomy" id="1279085"/>
    <lineage>
        <taxon>Eukaryota</taxon>
        <taxon>Fungi</taxon>
        <taxon>Dikarya</taxon>
        <taxon>Ascomycota</taxon>
        <taxon>Pezizomycotina</taxon>
        <taxon>Sordariomycetes</taxon>
        <taxon>Hypocreomycetidae</taxon>
        <taxon>Hypocreales</taxon>
        <taxon>Nectriaceae</taxon>
        <taxon>Fusarium</taxon>
        <taxon>Fusarium fujikuroi species complex</taxon>
    </lineage>
</organism>
<comment type="function">
    <text evidence="2">Nitrogen metabolite regulation-like protein involved in the regulation of the gene cluster that mediates the biosynthesis of bikaverin, a red pigment also considered as a mycotoxin (PubMed:19400779).</text>
</comment>
<comment type="induction">
    <text evidence="2">Expression is repressed at alkaline ambient pH and highly induced under nitrogen starvation and acidic pH conditions (PubMed:19400779).</text>
</comment>
<comment type="disruption phenotype">
    <text evidence="2">Leads to decreased production of bikaverin (PubMed:19400779).</text>
</comment>
<comment type="similarity">
    <text evidence="4">Belongs to the NmrA-type oxidoreductase family.</text>
</comment>
<protein>
    <recommendedName>
        <fullName evidence="4">Nitrogen metabolite regulation-like protein bik4</fullName>
    </recommendedName>
    <alternativeName>
        <fullName evidence="3">Bikaverin biosynthesis protein 4</fullName>
    </alternativeName>
</protein>
<evidence type="ECO:0000250" key="1">
    <source>
        <dbReference type="UniProtKB" id="Q5AU62"/>
    </source>
</evidence>
<evidence type="ECO:0000269" key="2">
    <source>
    </source>
</evidence>
<evidence type="ECO:0000303" key="3">
    <source>
    </source>
</evidence>
<evidence type="ECO:0000305" key="4"/>
<proteinExistence type="evidence at transcript level"/>
<keyword id="KW-0520">NAD</keyword>
<keyword id="KW-1185">Reference proteome</keyword>